<proteinExistence type="evidence at transcript level"/>
<reference key="1">
    <citation type="submission" date="2004-09" db="EMBL/GenBank/DDBJ databases">
        <authorList>
            <consortium name="NIH - Zebrafish Gene Collection (ZGC) project"/>
        </authorList>
    </citation>
    <scope>NUCLEOTIDE SEQUENCE [LARGE SCALE MRNA]</scope>
</reference>
<gene>
    <name type="primary">pdxdc1</name>
    <name type="ORF">zgc:92179</name>
</gene>
<name>PDXD1_DANRE</name>
<sequence>MGNHLSDAMKILESGKLETEQGQEGRKMSWKEIPGPLQGDGQDVVSILQLVQNLMHGDDEEQGHRMQFVGEQGHMALLGHSLAAYISVLERERLRKLTTRILSDTTLWLCRLFRYENGSAYFHEDDREGLLKVCRLVMNTHYEDFTTEGFTALSSKHPVIYQSAACRPGLGQHLCSQLGLPLSCLCVVPCNTMFGSLHQMDVALLDKLVKDDRDSGKLPLLLIANAGTPGAGHTDKLSRLKELCVQYNMWLHVEGVNLATLVLGQVSSTVTAATKCDSMTLTPGPWLGLPAVPAVTLYRHEDPALSLAAGLTSSQPVEKLRALPLWLSLQYLGHDGIVERIKHASQLSQQLLEHLKTLASIKTSVEDELNSPVVVFRFSHENSAPSSGGSVEGSYAGERDILDAFNRWLGDQLAEQVPLSGVDVVELEDEGTCVRFSPLMTAAALGTQENDVAALVEKLAEMIPLLCCTLRLRQDFRDEVLQQASLSYIEDLNWPGLGVVRFEPRTTDLDEDKRQDRVEKINSDLLKKLMELDTDLNFSGGPEFSEEKNCIFIGIATEDLDVAELVETIMSLGRDIEESGKLFENMTEVVRKGIQEAELQLQKANEEKLMEEGVLRQIPLVSSVLNWFSPVQASVKGRTFNLAEGCLDSTEPVYSIKAQMRKEDSPDSPKANTRRFPGQKLFRRPGAGSDSISETSSVSQLEESFRETLHSQAADEAEVPQERPAHILEETAIADQRVPEGQEAESVETIR</sequence>
<dbReference type="EC" id="4.1.1.-"/>
<dbReference type="EMBL" id="BC081619">
    <property type="protein sequence ID" value="AAH81619.1"/>
    <property type="molecule type" value="mRNA"/>
</dbReference>
<dbReference type="RefSeq" id="NP_001004552.2">
    <property type="nucleotide sequence ID" value="NM_001004552.1"/>
</dbReference>
<dbReference type="SMR" id="Q66HY8"/>
<dbReference type="FunCoup" id="Q66HY8">
    <property type="interactions" value="2387"/>
</dbReference>
<dbReference type="STRING" id="7955.ENSDARP00000136697"/>
<dbReference type="PaxDb" id="7955-ENSDARP00000118338"/>
<dbReference type="GeneID" id="447813"/>
<dbReference type="KEGG" id="dre:447813"/>
<dbReference type="AGR" id="ZFIN:ZDB-GENE-040912-16"/>
<dbReference type="CTD" id="23042"/>
<dbReference type="ZFIN" id="ZDB-GENE-040912-16">
    <property type="gene designation" value="pdxdc1"/>
</dbReference>
<dbReference type="eggNOG" id="KOG0630">
    <property type="taxonomic scope" value="Eukaryota"/>
</dbReference>
<dbReference type="InParanoid" id="Q66HY8"/>
<dbReference type="OrthoDB" id="2161780at2759"/>
<dbReference type="PhylomeDB" id="Q66HY8"/>
<dbReference type="PRO" id="PR:Q66HY8"/>
<dbReference type="Proteomes" id="UP000000437">
    <property type="component" value="Chromosome 3"/>
</dbReference>
<dbReference type="GO" id="GO:0043231">
    <property type="term" value="C:intracellular membrane-bounded organelle"/>
    <property type="evidence" value="ECO:0000318"/>
    <property type="project" value="GO_Central"/>
</dbReference>
<dbReference type="GO" id="GO:0016831">
    <property type="term" value="F:carboxy-lyase activity"/>
    <property type="evidence" value="ECO:0007669"/>
    <property type="project" value="UniProtKB-KW"/>
</dbReference>
<dbReference type="GO" id="GO:0030170">
    <property type="term" value="F:pyridoxal phosphate binding"/>
    <property type="evidence" value="ECO:0007669"/>
    <property type="project" value="InterPro"/>
</dbReference>
<dbReference type="GO" id="GO:0019752">
    <property type="term" value="P:carboxylic acid metabolic process"/>
    <property type="evidence" value="ECO:0007669"/>
    <property type="project" value="InterPro"/>
</dbReference>
<dbReference type="FunFam" id="3.40.640.10:FF:000036">
    <property type="entry name" value="pyridoxal-dependent decarboxylase domain-containing protein 1 isoform X2"/>
    <property type="match status" value="1"/>
</dbReference>
<dbReference type="Gene3D" id="3.40.640.10">
    <property type="entry name" value="Type I PLP-dependent aspartate aminotransferase-like (Major domain)"/>
    <property type="match status" value="1"/>
</dbReference>
<dbReference type="InterPro" id="IPR050477">
    <property type="entry name" value="GrpII_AminoAcid_Decarb"/>
</dbReference>
<dbReference type="InterPro" id="IPR055103">
    <property type="entry name" value="PDXDC1-like_2nd"/>
</dbReference>
<dbReference type="InterPro" id="IPR055102">
    <property type="entry name" value="PDXDC1-like_3rd"/>
</dbReference>
<dbReference type="InterPro" id="IPR002129">
    <property type="entry name" value="PyrdxlP-dep_de-COase"/>
</dbReference>
<dbReference type="InterPro" id="IPR015424">
    <property type="entry name" value="PyrdxlP-dep_Trfase"/>
</dbReference>
<dbReference type="InterPro" id="IPR015421">
    <property type="entry name" value="PyrdxlP-dep_Trfase_major"/>
</dbReference>
<dbReference type="PANTHER" id="PTHR42735">
    <property type="match status" value="1"/>
</dbReference>
<dbReference type="PANTHER" id="PTHR42735:SF1">
    <property type="entry name" value="PYRIDOXAL-DEPENDENT DECARBOXYLASE DOMAIN-CONTAINING PROTEIN 1-RELATED"/>
    <property type="match status" value="1"/>
</dbReference>
<dbReference type="Pfam" id="PF22930">
    <property type="entry name" value="PDXDC1-like_cen"/>
    <property type="match status" value="1"/>
</dbReference>
<dbReference type="Pfam" id="PF22937">
    <property type="entry name" value="PDXDC1-like_cen2"/>
    <property type="match status" value="1"/>
</dbReference>
<dbReference type="Pfam" id="PF00282">
    <property type="entry name" value="Pyridoxal_deC"/>
    <property type="match status" value="1"/>
</dbReference>
<dbReference type="SUPFAM" id="SSF53383">
    <property type="entry name" value="PLP-dependent transferases"/>
    <property type="match status" value="1"/>
</dbReference>
<protein>
    <recommendedName>
        <fullName>Pyridoxal-dependent decarboxylase domain-containing protein 1</fullName>
        <ecNumber>4.1.1.-</ecNumber>
    </recommendedName>
</protein>
<accession>Q66HY8</accession>
<comment type="cofactor">
    <cofactor evidence="1">
        <name>pyridoxal 5'-phosphate</name>
        <dbReference type="ChEBI" id="CHEBI:597326"/>
    </cofactor>
</comment>
<comment type="similarity">
    <text evidence="3">Belongs to the group II decarboxylase family.</text>
</comment>
<keyword id="KW-0210">Decarboxylase</keyword>
<keyword id="KW-0456">Lyase</keyword>
<keyword id="KW-0663">Pyridoxal phosphate</keyword>
<keyword id="KW-1185">Reference proteome</keyword>
<organism>
    <name type="scientific">Danio rerio</name>
    <name type="common">Zebrafish</name>
    <name type="synonym">Brachydanio rerio</name>
    <dbReference type="NCBI Taxonomy" id="7955"/>
    <lineage>
        <taxon>Eukaryota</taxon>
        <taxon>Metazoa</taxon>
        <taxon>Chordata</taxon>
        <taxon>Craniata</taxon>
        <taxon>Vertebrata</taxon>
        <taxon>Euteleostomi</taxon>
        <taxon>Actinopterygii</taxon>
        <taxon>Neopterygii</taxon>
        <taxon>Teleostei</taxon>
        <taxon>Ostariophysi</taxon>
        <taxon>Cypriniformes</taxon>
        <taxon>Danionidae</taxon>
        <taxon>Danioninae</taxon>
        <taxon>Danio</taxon>
    </lineage>
</organism>
<feature type="chain" id="PRO_0000297680" description="Pyridoxal-dependent decarboxylase domain-containing protein 1">
    <location>
        <begin position="1"/>
        <end position="751"/>
    </location>
</feature>
<feature type="region of interest" description="Disordered" evidence="2">
    <location>
        <begin position="659"/>
        <end position="751"/>
    </location>
</feature>
<feature type="compositionally biased region" description="Polar residues" evidence="2">
    <location>
        <begin position="690"/>
        <end position="702"/>
    </location>
</feature>
<feature type="compositionally biased region" description="Basic and acidic residues" evidence="2">
    <location>
        <begin position="720"/>
        <end position="729"/>
    </location>
</feature>
<feature type="compositionally biased region" description="Acidic residues" evidence="2">
    <location>
        <begin position="742"/>
        <end position="751"/>
    </location>
</feature>
<evidence type="ECO:0000250" key="1"/>
<evidence type="ECO:0000256" key="2">
    <source>
        <dbReference type="SAM" id="MobiDB-lite"/>
    </source>
</evidence>
<evidence type="ECO:0000305" key="3"/>